<organism>
    <name type="scientific">Mus musculus</name>
    <name type="common">Mouse</name>
    <dbReference type="NCBI Taxonomy" id="10090"/>
    <lineage>
        <taxon>Eukaryota</taxon>
        <taxon>Metazoa</taxon>
        <taxon>Chordata</taxon>
        <taxon>Craniata</taxon>
        <taxon>Vertebrata</taxon>
        <taxon>Euteleostomi</taxon>
        <taxon>Mammalia</taxon>
        <taxon>Eutheria</taxon>
        <taxon>Euarchontoglires</taxon>
        <taxon>Glires</taxon>
        <taxon>Rodentia</taxon>
        <taxon>Myomorpha</taxon>
        <taxon>Muroidea</taxon>
        <taxon>Muridae</taxon>
        <taxon>Murinae</taxon>
        <taxon>Mus</taxon>
        <taxon>Mus</taxon>
    </lineage>
</organism>
<reference evidence="9" key="1">
    <citation type="submission" date="2002-03" db="EMBL/GenBank/DDBJ databases">
        <title>Isolation and characterization of a mouse GTP-binding protein.</title>
        <authorList>
            <person name="Shan Z."/>
            <person name="Popescu N.C."/>
        </authorList>
    </citation>
    <scope>NUCLEOTIDE SEQUENCE [MRNA] OF 1-258</scope>
</reference>
<reference evidence="7 8" key="2">
    <citation type="journal article" date="2004" name="Genome Res.">
        <title>The status, quality, and expansion of the NIH full-length cDNA project: the Mammalian Gene Collection (MGC).</title>
        <authorList>
            <consortium name="The MGC Project Team"/>
        </authorList>
    </citation>
    <scope>NUCLEOTIDE SEQUENCE [LARGE SCALE MRNA] OF 67-449</scope>
    <source>
        <strain evidence="8">C57BL/6J</strain>
        <tissue evidence="8">Mammary gland</tissue>
    </source>
</reference>
<reference evidence="7 10" key="3">
    <citation type="journal article" date="2005" name="Science">
        <title>The transcriptional landscape of the mammalian genome.</title>
        <authorList>
            <person name="Carninci P."/>
            <person name="Kasukawa T."/>
            <person name="Katayama S."/>
            <person name="Gough J."/>
            <person name="Frith M.C."/>
            <person name="Maeda N."/>
            <person name="Oyama R."/>
            <person name="Ravasi T."/>
            <person name="Lenhard B."/>
            <person name="Wells C."/>
            <person name="Kodzius R."/>
            <person name="Shimokawa K."/>
            <person name="Bajic V.B."/>
            <person name="Brenner S.E."/>
            <person name="Batalov S."/>
            <person name="Forrest A.R."/>
            <person name="Zavolan M."/>
            <person name="Davis M.J."/>
            <person name="Wilming L.G."/>
            <person name="Aidinis V."/>
            <person name="Allen J.E."/>
            <person name="Ambesi-Impiombato A."/>
            <person name="Apweiler R."/>
            <person name="Aturaliya R.N."/>
            <person name="Bailey T.L."/>
            <person name="Bansal M."/>
            <person name="Baxter L."/>
            <person name="Beisel K.W."/>
            <person name="Bersano T."/>
            <person name="Bono H."/>
            <person name="Chalk A.M."/>
            <person name="Chiu K.P."/>
            <person name="Choudhary V."/>
            <person name="Christoffels A."/>
            <person name="Clutterbuck D.R."/>
            <person name="Crowe M.L."/>
            <person name="Dalla E."/>
            <person name="Dalrymple B.P."/>
            <person name="de Bono B."/>
            <person name="Della Gatta G."/>
            <person name="di Bernardo D."/>
            <person name="Down T."/>
            <person name="Engstrom P."/>
            <person name="Fagiolini M."/>
            <person name="Faulkner G."/>
            <person name="Fletcher C.F."/>
            <person name="Fukushima T."/>
            <person name="Furuno M."/>
            <person name="Futaki S."/>
            <person name="Gariboldi M."/>
            <person name="Georgii-Hemming P."/>
            <person name="Gingeras T.R."/>
            <person name="Gojobori T."/>
            <person name="Green R.E."/>
            <person name="Gustincich S."/>
            <person name="Harbers M."/>
            <person name="Hayashi Y."/>
            <person name="Hensch T.K."/>
            <person name="Hirokawa N."/>
            <person name="Hill D."/>
            <person name="Huminiecki L."/>
            <person name="Iacono M."/>
            <person name="Ikeo K."/>
            <person name="Iwama A."/>
            <person name="Ishikawa T."/>
            <person name="Jakt M."/>
            <person name="Kanapin A."/>
            <person name="Katoh M."/>
            <person name="Kawasawa Y."/>
            <person name="Kelso J."/>
            <person name="Kitamura H."/>
            <person name="Kitano H."/>
            <person name="Kollias G."/>
            <person name="Krishnan S.P."/>
            <person name="Kruger A."/>
            <person name="Kummerfeld S.K."/>
            <person name="Kurochkin I.V."/>
            <person name="Lareau L.F."/>
            <person name="Lazarevic D."/>
            <person name="Lipovich L."/>
            <person name="Liu J."/>
            <person name="Liuni S."/>
            <person name="McWilliam S."/>
            <person name="Madan Babu M."/>
            <person name="Madera M."/>
            <person name="Marchionni L."/>
            <person name="Matsuda H."/>
            <person name="Matsuzawa S."/>
            <person name="Miki H."/>
            <person name="Mignone F."/>
            <person name="Miyake S."/>
            <person name="Morris K."/>
            <person name="Mottagui-Tabar S."/>
            <person name="Mulder N."/>
            <person name="Nakano N."/>
            <person name="Nakauchi H."/>
            <person name="Ng P."/>
            <person name="Nilsson R."/>
            <person name="Nishiguchi S."/>
            <person name="Nishikawa S."/>
            <person name="Nori F."/>
            <person name="Ohara O."/>
            <person name="Okazaki Y."/>
            <person name="Orlando V."/>
            <person name="Pang K.C."/>
            <person name="Pavan W.J."/>
            <person name="Pavesi G."/>
            <person name="Pesole G."/>
            <person name="Petrovsky N."/>
            <person name="Piazza S."/>
            <person name="Reed J."/>
            <person name="Reid J.F."/>
            <person name="Ring B.Z."/>
            <person name="Ringwald M."/>
            <person name="Rost B."/>
            <person name="Ruan Y."/>
            <person name="Salzberg S.L."/>
            <person name="Sandelin A."/>
            <person name="Schneider C."/>
            <person name="Schoenbach C."/>
            <person name="Sekiguchi K."/>
            <person name="Semple C.A."/>
            <person name="Seno S."/>
            <person name="Sessa L."/>
            <person name="Sheng Y."/>
            <person name="Shibata Y."/>
            <person name="Shimada H."/>
            <person name="Shimada K."/>
            <person name="Silva D."/>
            <person name="Sinclair B."/>
            <person name="Sperling S."/>
            <person name="Stupka E."/>
            <person name="Sugiura K."/>
            <person name="Sultana R."/>
            <person name="Takenaka Y."/>
            <person name="Taki K."/>
            <person name="Tammoja K."/>
            <person name="Tan S.L."/>
            <person name="Tang S."/>
            <person name="Taylor M.S."/>
            <person name="Tegner J."/>
            <person name="Teichmann S.A."/>
            <person name="Ueda H.R."/>
            <person name="van Nimwegen E."/>
            <person name="Verardo R."/>
            <person name="Wei C.L."/>
            <person name="Yagi K."/>
            <person name="Yamanishi H."/>
            <person name="Zabarovsky E."/>
            <person name="Zhu S."/>
            <person name="Zimmer A."/>
            <person name="Hide W."/>
            <person name="Bult C."/>
            <person name="Grimmond S.M."/>
            <person name="Teasdale R.D."/>
            <person name="Liu E.T."/>
            <person name="Brusic V."/>
            <person name="Quackenbush J."/>
            <person name="Wahlestedt C."/>
            <person name="Mattick J.S."/>
            <person name="Hume D.A."/>
            <person name="Kai C."/>
            <person name="Sasaki D."/>
            <person name="Tomaru Y."/>
            <person name="Fukuda S."/>
            <person name="Kanamori-Katayama M."/>
            <person name="Suzuki M."/>
            <person name="Aoki J."/>
            <person name="Arakawa T."/>
            <person name="Iida J."/>
            <person name="Imamura K."/>
            <person name="Itoh M."/>
            <person name="Kato T."/>
            <person name="Kawaji H."/>
            <person name="Kawagashira N."/>
            <person name="Kawashima T."/>
            <person name="Kojima M."/>
            <person name="Kondo S."/>
            <person name="Konno H."/>
            <person name="Nakano K."/>
            <person name="Ninomiya N."/>
            <person name="Nishio T."/>
            <person name="Okada M."/>
            <person name="Plessy C."/>
            <person name="Shibata K."/>
            <person name="Shiraki T."/>
            <person name="Suzuki S."/>
            <person name="Tagami M."/>
            <person name="Waki K."/>
            <person name="Watahiki A."/>
            <person name="Okamura-Oho Y."/>
            <person name="Suzuki H."/>
            <person name="Kawai J."/>
            <person name="Hayashizaki Y."/>
        </authorList>
    </citation>
    <scope>NUCLEOTIDE SEQUENCE [LARGE SCALE MRNA] OF 111-449</scope>
    <source>
        <strain evidence="10">C57BL/6J</strain>
        <tissue evidence="10">Embryo</tissue>
    </source>
</reference>
<reference key="4">
    <citation type="journal article" date="2014" name="Cell">
        <title>Sestrins function as guanine nucleotide dissociation inhibitors for Rag GTPases to control mTORC1 signaling.</title>
        <authorList>
            <person name="Peng M."/>
            <person name="Yin N."/>
            <person name="Li M.O."/>
        </authorList>
    </citation>
    <scope>INTERACTION WITH SESN1; SESN2 AND SESN3</scope>
</reference>
<reference key="5">
    <citation type="journal article" date="2019" name="Cell Stem Cell">
        <title>Lysosomal signaling licenses embryonic stem cell differentiation via inactivation of Tfe3.</title>
        <authorList>
            <person name="Villegas F."/>
            <person name="Lehalle D."/>
            <person name="Mayer D."/>
            <person name="Rittirsch M."/>
            <person name="Stadler M.B."/>
            <person name="Zinner M."/>
            <person name="Olivieri D."/>
            <person name="Vabres P."/>
            <person name="Duplomb-Jego L."/>
            <person name="De Bont E.S.J.M."/>
            <person name="Duffourd Y."/>
            <person name="Duijkers F."/>
            <person name="Avila M."/>
            <person name="Genevieve D."/>
            <person name="Houcinat N."/>
            <person name="Jouan T."/>
            <person name="Kuentz P."/>
            <person name="Lichtenbelt K.D."/>
            <person name="Thauvin-Robinet C."/>
            <person name="St-Onge J."/>
            <person name="Thevenon J."/>
            <person name="van Gassen K.L.I."/>
            <person name="van Haelst M."/>
            <person name="van Koningsbruggen S."/>
            <person name="Hess D."/>
            <person name="Smallwood S.A."/>
            <person name="Riviere J.B."/>
            <person name="Faivre L."/>
            <person name="Betschinger J."/>
        </authorList>
    </citation>
    <scope>INTERACTION WITH TFE3</scope>
</reference>
<reference key="6">
    <citation type="journal article" date="2021" name="J. Am. Soc. Nephrol.">
        <title>mTOR-Activating Mutations in RRAGD Are Causative for Kidney Tubulopathy and Cardiomyopathy.</title>
        <authorList>
            <person name="Schlingmann K.P."/>
            <person name="Jouret F."/>
            <person name="Shen K."/>
            <person name="Nigam A."/>
            <person name="Arjona F.J."/>
            <person name="Dafinger C."/>
            <person name="Houillier P."/>
            <person name="Jones D.P."/>
            <person name="Kleinerueschkamp F."/>
            <person name="Oh J."/>
            <person name="Godefroid N."/>
            <person name="Eltan M."/>
            <person name="Gueran T."/>
            <person name="Burtey S."/>
            <person name="Parotte M.C."/>
            <person name="Koenig J."/>
            <person name="Braun A."/>
            <person name="Bos C."/>
            <person name="Ibars Serra M."/>
            <person name="Rehmann H."/>
            <person name="Zwartkruis F.J.T."/>
            <person name="Renkema K.Y."/>
            <person name="Klingel K."/>
            <person name="Schulze-Bahr E."/>
            <person name="Schermer B."/>
            <person name="Bergmann C."/>
            <person name="Altmueller J."/>
            <person name="Thiele H."/>
            <person name="Beck B.B."/>
            <person name="Dahan K."/>
            <person name="Sabatini D."/>
            <person name="Liebau M.C."/>
            <person name="Vargas-Poussou R."/>
            <person name="Knoers N.V.A.M."/>
            <person name="Konrad M."/>
            <person name="de Baaij J.H.F."/>
        </authorList>
    </citation>
    <scope>TISSUE SPECIFICITY</scope>
</reference>
<dbReference type="EC" id="3.6.5.-" evidence="2"/>
<dbReference type="EMBL" id="AF490406">
    <property type="protein sequence ID" value="AAP40334.1"/>
    <property type="molecule type" value="mRNA"/>
</dbReference>
<dbReference type="EMBL" id="BC038137">
    <property type="protein sequence ID" value="AAH38137.1"/>
    <property type="molecule type" value="mRNA"/>
</dbReference>
<dbReference type="EMBL" id="AK017818">
    <property type="protein sequence ID" value="BAB30954.2"/>
    <property type="molecule type" value="mRNA"/>
</dbReference>
<dbReference type="RefSeq" id="NP_081767.2">
    <property type="nucleotide sequence ID" value="NM_027491.2"/>
</dbReference>
<dbReference type="SMR" id="Q7TT45"/>
<dbReference type="BioGRID" id="206438">
    <property type="interactions" value="1"/>
</dbReference>
<dbReference type="FunCoup" id="Q7TT45">
    <property type="interactions" value="1619"/>
</dbReference>
<dbReference type="STRING" id="10090.ENSMUSP00000095792"/>
<dbReference type="GlyGen" id="Q7TT45">
    <property type="glycosylation" value="3 sites, 1 O-linked glycan (3 sites)"/>
</dbReference>
<dbReference type="iPTMnet" id="Q7TT45"/>
<dbReference type="PhosphoSitePlus" id="Q7TT45"/>
<dbReference type="SwissPalm" id="Q7TT45"/>
<dbReference type="jPOST" id="Q7TT45"/>
<dbReference type="ProteomicsDB" id="262706"/>
<dbReference type="DNASU" id="52187"/>
<dbReference type="GeneID" id="52187"/>
<dbReference type="KEGG" id="mmu:52187"/>
<dbReference type="UCSC" id="uc008sfm.1">
    <property type="organism name" value="mouse"/>
</dbReference>
<dbReference type="AGR" id="MGI:1098604"/>
<dbReference type="CTD" id="58528"/>
<dbReference type="MGI" id="MGI:1098604">
    <property type="gene designation" value="Rragd"/>
</dbReference>
<dbReference type="InParanoid" id="Q7TT45"/>
<dbReference type="Reactome" id="R-MMU-1632852">
    <property type="pathway name" value="Macroautophagy"/>
</dbReference>
<dbReference type="Reactome" id="R-MMU-165159">
    <property type="pathway name" value="MTOR signalling"/>
</dbReference>
<dbReference type="Reactome" id="R-MMU-166208">
    <property type="pathway name" value="mTORC1-mediated signalling"/>
</dbReference>
<dbReference type="Reactome" id="R-MMU-380972">
    <property type="pathway name" value="Energy dependent regulation of mTOR by LKB1-AMPK"/>
</dbReference>
<dbReference type="Reactome" id="R-MMU-5628897">
    <property type="pathway name" value="TP53 Regulates Metabolic Genes"/>
</dbReference>
<dbReference type="Reactome" id="R-MMU-8943724">
    <property type="pathway name" value="Regulation of PTEN gene transcription"/>
</dbReference>
<dbReference type="Reactome" id="R-MMU-9639288">
    <property type="pathway name" value="Amino acids regulate mTORC1"/>
</dbReference>
<dbReference type="BioGRID-ORCS" id="52187">
    <property type="hits" value="4 hits in 77 CRISPR screens"/>
</dbReference>
<dbReference type="ChiTaRS" id="Rragd">
    <property type="organism name" value="mouse"/>
</dbReference>
<dbReference type="PRO" id="PR:Q7TT45"/>
<dbReference type="Proteomes" id="UP000000589">
    <property type="component" value="Unplaced"/>
</dbReference>
<dbReference type="RNAct" id="Q7TT45">
    <property type="molecule type" value="protein"/>
</dbReference>
<dbReference type="GO" id="GO:0005737">
    <property type="term" value="C:cytoplasm"/>
    <property type="evidence" value="ECO:0000250"/>
    <property type="project" value="UniProtKB"/>
</dbReference>
<dbReference type="GO" id="GO:0005765">
    <property type="term" value="C:lysosomal membrane"/>
    <property type="evidence" value="ECO:0007669"/>
    <property type="project" value="UniProtKB-SubCell"/>
</dbReference>
<dbReference type="GO" id="GO:0005764">
    <property type="term" value="C:lysosome"/>
    <property type="evidence" value="ECO:0000250"/>
    <property type="project" value="UniProtKB"/>
</dbReference>
<dbReference type="GO" id="GO:0005634">
    <property type="term" value="C:nucleus"/>
    <property type="evidence" value="ECO:0000250"/>
    <property type="project" value="UniProtKB"/>
</dbReference>
<dbReference type="GO" id="GO:0019003">
    <property type="term" value="F:GDP binding"/>
    <property type="evidence" value="ECO:0000250"/>
    <property type="project" value="UniProtKB"/>
</dbReference>
<dbReference type="GO" id="GO:0005525">
    <property type="term" value="F:GTP binding"/>
    <property type="evidence" value="ECO:0007669"/>
    <property type="project" value="UniProtKB-KW"/>
</dbReference>
<dbReference type="GO" id="GO:0003924">
    <property type="term" value="F:GTPase activity"/>
    <property type="evidence" value="ECO:0007669"/>
    <property type="project" value="RHEA"/>
</dbReference>
<dbReference type="GO" id="GO:0060090">
    <property type="term" value="F:molecular adaptor activity"/>
    <property type="evidence" value="ECO:0000250"/>
    <property type="project" value="UniProtKB"/>
</dbReference>
<dbReference type="GO" id="GO:1904263">
    <property type="term" value="P:positive regulation of TORC1 signaling"/>
    <property type="evidence" value="ECO:0000250"/>
    <property type="project" value="UniProtKB"/>
</dbReference>
<dbReference type="CDD" id="cd11385">
    <property type="entry name" value="RagC_like"/>
    <property type="match status" value="1"/>
</dbReference>
<dbReference type="FunFam" id="3.30.450.190:FF:000001">
    <property type="entry name" value="Ras-related GTP-binding protein C"/>
    <property type="match status" value="1"/>
</dbReference>
<dbReference type="FunFam" id="3.40.50.300:FF:000226">
    <property type="entry name" value="Ras-related GTP-binding protein D"/>
    <property type="match status" value="1"/>
</dbReference>
<dbReference type="Gene3D" id="3.30.450.190">
    <property type="match status" value="1"/>
</dbReference>
<dbReference type="Gene3D" id="3.40.50.300">
    <property type="entry name" value="P-loop containing nucleotide triphosphate hydrolases"/>
    <property type="match status" value="1"/>
</dbReference>
<dbReference type="InterPro" id="IPR006762">
    <property type="entry name" value="Gtr1_RagA"/>
</dbReference>
<dbReference type="InterPro" id="IPR027417">
    <property type="entry name" value="P-loop_NTPase"/>
</dbReference>
<dbReference type="InterPro" id="IPR039400">
    <property type="entry name" value="RagC/D"/>
</dbReference>
<dbReference type="PANTHER" id="PTHR11259">
    <property type="entry name" value="RAS-RELATED GTP BINDING RAG/GTR YEAST"/>
    <property type="match status" value="1"/>
</dbReference>
<dbReference type="PANTHER" id="PTHR11259:SF5">
    <property type="entry name" value="RAS-RELATED GTP-BINDING PROTEIN D"/>
    <property type="match status" value="1"/>
</dbReference>
<dbReference type="Pfam" id="PF04670">
    <property type="entry name" value="Gtr1_RagA"/>
    <property type="match status" value="1"/>
</dbReference>
<dbReference type="SUPFAM" id="SSF52540">
    <property type="entry name" value="P-loop containing nucleoside triphosphate hydrolases"/>
    <property type="match status" value="1"/>
</dbReference>
<feature type="chain" id="PRO_0000239954" description="Ras-related GTP-binding protein D">
    <location>
        <begin position="1"/>
        <end position="449"/>
    </location>
</feature>
<feature type="region of interest" description="Disordered" evidence="3">
    <location>
        <begin position="1"/>
        <end position="55"/>
    </location>
</feature>
<feature type="region of interest" description="Disordered" evidence="3">
    <location>
        <begin position="428"/>
        <end position="449"/>
    </location>
</feature>
<feature type="compositionally biased region" description="Acidic residues" evidence="3">
    <location>
        <begin position="14"/>
        <end position="24"/>
    </location>
</feature>
<feature type="compositionally biased region" description="Acidic residues" evidence="3">
    <location>
        <begin position="32"/>
        <end position="47"/>
    </location>
</feature>
<feature type="binding site" evidence="2">
    <location>
        <position position="120"/>
    </location>
    <ligand>
        <name>GTP</name>
        <dbReference type="ChEBI" id="CHEBI:37565"/>
    </ligand>
</feature>
<feature type="binding site" evidence="1">
    <location>
        <position position="121"/>
    </location>
    <ligand>
        <name>GDP</name>
        <dbReference type="ChEBI" id="CHEBI:58189"/>
    </ligand>
</feature>
<feature type="binding site" evidence="2">
    <location>
        <position position="121"/>
    </location>
    <ligand>
        <name>GTP</name>
        <dbReference type="ChEBI" id="CHEBI:37565"/>
    </ligand>
</feature>
<feature type="binding site" evidence="1">
    <location>
        <position position="122"/>
    </location>
    <ligand>
        <name>GDP</name>
        <dbReference type="ChEBI" id="CHEBI:58189"/>
    </ligand>
</feature>
<feature type="binding site" evidence="2">
    <location>
        <position position="122"/>
    </location>
    <ligand>
        <name>GTP</name>
        <dbReference type="ChEBI" id="CHEBI:37565"/>
    </ligand>
</feature>
<feature type="binding site" evidence="1">
    <location>
        <position position="123"/>
    </location>
    <ligand>
        <name>GDP</name>
        <dbReference type="ChEBI" id="CHEBI:58189"/>
    </ligand>
</feature>
<feature type="binding site" evidence="2">
    <location>
        <position position="123"/>
    </location>
    <ligand>
        <name>GTP</name>
        <dbReference type="ChEBI" id="CHEBI:37565"/>
    </ligand>
</feature>
<feature type="binding site" evidence="1">
    <location>
        <position position="124"/>
    </location>
    <ligand>
        <name>GDP</name>
        <dbReference type="ChEBI" id="CHEBI:58189"/>
    </ligand>
</feature>
<feature type="binding site" evidence="2">
    <location>
        <position position="124"/>
    </location>
    <ligand>
        <name>GTP</name>
        <dbReference type="ChEBI" id="CHEBI:37565"/>
    </ligand>
</feature>
<feature type="binding site" evidence="1">
    <location>
        <position position="125"/>
    </location>
    <ligand>
        <name>GDP</name>
        <dbReference type="ChEBI" id="CHEBI:58189"/>
    </ligand>
</feature>
<feature type="binding site" evidence="2">
    <location>
        <position position="125"/>
    </location>
    <ligand>
        <name>GTP</name>
        <dbReference type="ChEBI" id="CHEBI:37565"/>
    </ligand>
</feature>
<feature type="binding site" evidence="1">
    <location>
        <position position="126"/>
    </location>
    <ligand>
        <name>GDP</name>
        <dbReference type="ChEBI" id="CHEBI:58189"/>
    </ligand>
</feature>
<feature type="binding site" evidence="2">
    <location>
        <position position="126"/>
    </location>
    <ligand>
        <name>GTP</name>
        <dbReference type="ChEBI" id="CHEBI:37565"/>
    </ligand>
</feature>
<feature type="binding site" evidence="1">
    <location>
        <position position="140"/>
    </location>
    <ligand>
        <name>GDP</name>
        <dbReference type="ChEBI" id="CHEBI:58189"/>
    </ligand>
</feature>
<feature type="binding site" evidence="2">
    <location>
        <position position="140"/>
    </location>
    <ligand>
        <name>GTP</name>
        <dbReference type="ChEBI" id="CHEBI:37565"/>
    </ligand>
</feature>
<feature type="binding site" evidence="1">
    <location>
        <position position="144"/>
    </location>
    <ligand>
        <name>GDP</name>
        <dbReference type="ChEBI" id="CHEBI:58189"/>
    </ligand>
</feature>
<feature type="binding site" evidence="1">
    <location>
        <position position="146"/>
    </location>
    <ligand>
        <name>GDP</name>
        <dbReference type="ChEBI" id="CHEBI:58189"/>
    </ligand>
</feature>
<feature type="binding site" evidence="2">
    <location>
        <position position="146"/>
    </location>
    <ligand>
        <name>GTP</name>
        <dbReference type="ChEBI" id="CHEBI:37565"/>
    </ligand>
</feature>
<feature type="binding site" evidence="2">
    <location>
        <position position="169"/>
    </location>
    <ligand>
        <name>GTP</name>
        <dbReference type="ChEBI" id="CHEBI:37565"/>
    </ligand>
</feature>
<feature type="binding site" evidence="1">
    <location>
        <position position="228"/>
    </location>
    <ligand>
        <name>GDP</name>
        <dbReference type="ChEBI" id="CHEBI:58189"/>
    </ligand>
</feature>
<feature type="binding site" evidence="2">
    <location>
        <position position="228"/>
    </location>
    <ligand>
        <name>GTP</name>
        <dbReference type="ChEBI" id="CHEBI:37565"/>
    </ligand>
</feature>
<feature type="binding site" evidence="1">
    <location>
        <position position="229"/>
    </location>
    <ligand>
        <name>GDP</name>
        <dbReference type="ChEBI" id="CHEBI:58189"/>
    </ligand>
</feature>
<feature type="binding site" evidence="2">
    <location>
        <position position="229"/>
    </location>
    <ligand>
        <name>GTP</name>
        <dbReference type="ChEBI" id="CHEBI:37565"/>
    </ligand>
</feature>
<feature type="binding site" evidence="1">
    <location>
        <position position="231"/>
    </location>
    <ligand>
        <name>GDP</name>
        <dbReference type="ChEBI" id="CHEBI:58189"/>
    </ligand>
</feature>
<feature type="binding site" evidence="2">
    <location>
        <position position="231"/>
    </location>
    <ligand>
        <name>GTP</name>
        <dbReference type="ChEBI" id="CHEBI:37565"/>
    </ligand>
</feature>
<feature type="binding site" evidence="1">
    <location>
        <position position="269"/>
    </location>
    <ligand>
        <name>GDP</name>
        <dbReference type="ChEBI" id="CHEBI:58189"/>
    </ligand>
</feature>
<feature type="binding site" evidence="1">
    <location>
        <position position="270"/>
    </location>
    <ligand>
        <name>GDP</name>
        <dbReference type="ChEBI" id="CHEBI:58189"/>
    </ligand>
</feature>
<feature type="binding site" evidence="2">
    <location>
        <position position="270"/>
    </location>
    <ligand>
        <name>GTP</name>
        <dbReference type="ChEBI" id="CHEBI:37565"/>
    </ligand>
</feature>
<feature type="sequence conflict" description="In Ref. 3; BAB30954." evidence="7" ref="3">
    <original>K</original>
    <variation>M</variation>
    <location>
        <position position="111"/>
    </location>
</feature>
<feature type="sequence conflict" description="In Ref. 3; BAB30954." evidence="7" ref="3">
    <original>L</original>
    <variation>S</variation>
    <location>
        <position position="115"/>
    </location>
</feature>
<feature type="sequence conflict" description="In Ref. 3; BAB30954." evidence="7" ref="3">
    <original>F</original>
    <variation>L</variation>
    <location>
        <position position="184"/>
    </location>
</feature>
<feature type="sequence conflict" description="In Ref. 2; AAH38137." evidence="7" ref="2">
    <original>F</original>
    <variation>C</variation>
    <location>
        <position position="192"/>
    </location>
</feature>
<feature type="sequence conflict" description="In Ref. 3; BAB30954." evidence="7" ref="3">
    <original>K</original>
    <variation>M</variation>
    <location>
        <position position="383"/>
    </location>
</feature>
<gene>
    <name evidence="11" type="primary">Rragd</name>
    <name evidence="9" type="synonym">Ragd</name>
</gene>
<comment type="function">
    <text evidence="2">Guanine nucleotide-binding protein that plays a crucial role in the cellular response to amino acid availability through regulation of the mTORC1 signaling cascade. Forms heterodimeric Rag complexes with RagA/RRAGA or RagB/RRAGB and cycles between an inactive GTP-bound and an active GDP-bound form: RagD/RRAGD is in its active form when GDP-bound RagD/RRAGD forms a complex with GTP-bound RagA/RRAGA (or RagB/RRAGB) and in an inactive form when GTP-bound RagD/RRAGD heterodimerizes with GDP-bound RagA/RRAGA (or RagB/RRAGB). In its active form, promotes the recruitment of mTORC1 to the lysosomes and its subsequent activation by the GTPase RHEB. This is a crucial step in the activation of the MTOR signaling cascade by amino acids. Also plays a central role in the non-canonical mTORC1 complex, which acts independently of RHEB and specifically mediates phosphorylation of MiT/TFE factors TFEB and TFE3: GDP-bound RagD/RRAGD mediates recruitment of MiT/TFE factors TFEB and TFE3.</text>
</comment>
<comment type="catalytic activity">
    <reaction evidence="2">
        <text>GTP + H2O = GDP + phosphate + H(+)</text>
        <dbReference type="Rhea" id="RHEA:19669"/>
        <dbReference type="ChEBI" id="CHEBI:15377"/>
        <dbReference type="ChEBI" id="CHEBI:15378"/>
        <dbReference type="ChEBI" id="CHEBI:37565"/>
        <dbReference type="ChEBI" id="CHEBI:43474"/>
        <dbReference type="ChEBI" id="CHEBI:58189"/>
    </reaction>
    <physiologicalReaction direction="left-to-right" evidence="2">
        <dbReference type="Rhea" id="RHEA:19670"/>
    </physiologicalReaction>
</comment>
<comment type="activity regulation">
    <text evidence="1 2">The activation of RagD/RRAGD is mediated by a GTPase activating protein (GAP). In high-amino acid conditions, activated by GTPase activating protein FLCN that stimulates RRAGD GTPase activity to turn it into its active GDP-bound form (By similarity). In response to amino acid depletion, the GATOR1 complex inactivates RagC/RRAGC by securing the GTP-bound inactive form (By similarity).</text>
</comment>
<comment type="subunit">
    <text evidence="1 2 4 5">Forms a heterodimer with RRAGA in a sequence-independent manner and RRAGB. Heterodimerization stabilizes RRAG proteins. The GDP-bound form of RRAGD (in complex with the GTP-bound form of RRAGA or RRAGB), interacts with RPTOR, thereby promoting recruitment of mTORC1 to the lysosomes (By similarity). Component of the lysosomal folliculin complex (LFC), composed of FLCN, FNIP1 (or FNIP2), RagA/RRAGA or RagB/RRAGB GDP-bound, RagC/RRAGC or RagD/RRAGD GTP-bound, and Ragulator (By similarity). Interacts with NOL8. Interacts with SH3BP4; the interaction with this negative regulator is most probably direct, preferentially occurs with the inactive GDP-bound form of RRAGD and is negatively regulated by amino acids (By similarity). The Rag heterodimer interacts with SLC38A9; the probable amino acid sensor. Interacts with SESN1, SESN2 and SESN3 (PubMed:25259925). The GDP-bound form interacts with TFEB (By similarity). The GDP-bound form interacts with TFE3 (PubMed:30595499).</text>
</comment>
<comment type="subcellular location">
    <subcellularLocation>
        <location evidence="2">Cytoplasm</location>
    </subcellularLocation>
    <subcellularLocation>
        <location evidence="2">Nucleus</location>
    </subcellularLocation>
    <subcellularLocation>
        <location evidence="2">Lysosome membrane</location>
    </subcellularLocation>
    <text evidence="2">Predominantly cytoplasmic. Recruited to the lysosome surface by the Ragulator complex. May shuttle between the cytoplasm and nucleus, depending on the bound nucleotide state of associated RRAGA.</text>
</comment>
<comment type="tissue specificity">
    <text evidence="6">Expressed in the distal tubule of the kidney.</text>
</comment>
<comment type="similarity">
    <text evidence="7">Belongs to the GTR/RAG GTP-binding protein family.</text>
</comment>
<keyword id="KW-0963">Cytoplasm</keyword>
<keyword id="KW-0342">GTP-binding</keyword>
<keyword id="KW-0378">Hydrolase</keyword>
<keyword id="KW-0458">Lysosome</keyword>
<keyword id="KW-0472">Membrane</keyword>
<keyword id="KW-0547">Nucleotide-binding</keyword>
<keyword id="KW-0539">Nucleus</keyword>
<keyword id="KW-1185">Reference proteome</keyword>
<protein>
    <recommendedName>
        <fullName>Ras-related GTP-binding protein D</fullName>
        <shortName>Rag D</shortName>
        <shortName>RagD</shortName>
        <ecNumber evidence="2">3.6.5.-</ecNumber>
    </recommendedName>
</protein>
<name>RRAGD_MOUSE</name>
<sequence length="449" mass="51232">MSQVLGKPQPQGEDGGEDQEEDELVGLAGYEDGPESSDAELDSGPEEGESRRNSWMPRSWCSEATRHECWEPGLWRSSHLLGIGGGWRMLRRQRQADFFLDFSDPFSTEVKPRILLMGLRRSGKSSIQKVVFHKMSPSETLFLESTNRICREDVSNSSFVNFQIWDFPGQIDFFDPTFDYEMIFRGTGALIFVIDSQDDYMEALARLHLTVTRAYKVNTDINFEVFIHKVDGLSDDHKIETQRDIHQRANDDLADAGLEKIHLSFYLTSIYDHSIFEAFSKVVQKLIPQLPTLENLLNIFISNSGIEKAFLFDVVSKIYIATDSTPVDMQTYELCCDMIDVVIDISCIYGLKEDGAGAPYDKDSTAIIKLNNTTVLYLKEVTKFLALVCFVREESFERKGLIDYNFHCFRKAIHEVFEVRMKMVKSRKAQSRLPKKTGATPNGTPRVLL</sequence>
<proteinExistence type="evidence at protein level"/>
<evidence type="ECO:0000250" key="1">
    <source>
        <dbReference type="UniProtKB" id="Q9HB90"/>
    </source>
</evidence>
<evidence type="ECO:0000250" key="2">
    <source>
        <dbReference type="UniProtKB" id="Q9NQL2"/>
    </source>
</evidence>
<evidence type="ECO:0000256" key="3">
    <source>
        <dbReference type="SAM" id="MobiDB-lite"/>
    </source>
</evidence>
<evidence type="ECO:0000269" key="4">
    <source>
    </source>
</evidence>
<evidence type="ECO:0000269" key="5">
    <source>
    </source>
</evidence>
<evidence type="ECO:0000269" key="6">
    <source>
    </source>
</evidence>
<evidence type="ECO:0000305" key="7"/>
<evidence type="ECO:0000312" key="8">
    <source>
        <dbReference type="EMBL" id="AAH38137.1"/>
    </source>
</evidence>
<evidence type="ECO:0000312" key="9">
    <source>
        <dbReference type="EMBL" id="AAP40334.1"/>
    </source>
</evidence>
<evidence type="ECO:0000312" key="10">
    <source>
        <dbReference type="EMBL" id="BAB30954.2"/>
    </source>
</evidence>
<evidence type="ECO:0000312" key="11">
    <source>
        <dbReference type="MGI" id="MGI:1098604"/>
    </source>
</evidence>
<accession>Q7TT45</accession>
<accession>Q6GTT2</accession>
<accession>Q9CYC2</accession>